<evidence type="ECO:0000255" key="1">
    <source>
        <dbReference type="HAMAP-Rule" id="MF_00052"/>
    </source>
</evidence>
<evidence type="ECO:0000255" key="2">
    <source>
        <dbReference type="PROSITE-ProRule" id="PRU01319"/>
    </source>
</evidence>
<protein>
    <recommendedName>
        <fullName evidence="1">Ribonuclease HII</fullName>
        <shortName evidence="1">RNase HII</shortName>
        <ecNumber evidence="1">3.1.26.4</ecNumber>
    </recommendedName>
</protein>
<keyword id="KW-0963">Cytoplasm</keyword>
<keyword id="KW-0255">Endonuclease</keyword>
<keyword id="KW-0378">Hydrolase</keyword>
<keyword id="KW-0464">Manganese</keyword>
<keyword id="KW-0479">Metal-binding</keyword>
<keyword id="KW-0540">Nuclease</keyword>
<keyword id="KW-1185">Reference proteome</keyword>
<proteinExistence type="inferred from homology"/>
<name>RNH2_LACAC</name>
<sequence>MTIKEIKELLKGDVSEEEIANLEKDSRSGVQKLLISYRKKQKKLFEKKQAFLERFLYEKQFWQKGQLVAGVDEVGRGPLAGPVVTAAVIIDQDFDLLDVNDSKKLSPEKRLKLYPKILEEAVSVAVGVKNAQVIDQINIYEADRQAMAQAVNALDIKPDALLVDAMNVPVDLPQIELIKGDAKSNSIAAASIVAKVFRDKLMDDYDKIYPHYGFSRNAGYGTKEHIDALKQYGPTHIHRKTFAPVSDFFK</sequence>
<organism>
    <name type="scientific">Lactobacillus acidophilus (strain ATCC 700396 / NCK56 / N2 / NCFM)</name>
    <dbReference type="NCBI Taxonomy" id="272621"/>
    <lineage>
        <taxon>Bacteria</taxon>
        <taxon>Bacillati</taxon>
        <taxon>Bacillota</taxon>
        <taxon>Bacilli</taxon>
        <taxon>Lactobacillales</taxon>
        <taxon>Lactobacillaceae</taxon>
        <taxon>Lactobacillus</taxon>
    </lineage>
</organism>
<reference key="1">
    <citation type="journal article" date="2005" name="Proc. Natl. Acad. Sci. U.S.A.">
        <title>Complete genome sequence of the probiotic lactic acid bacterium Lactobacillus acidophilus NCFM.</title>
        <authorList>
            <person name="Altermann E."/>
            <person name="Russell W.M."/>
            <person name="Azcarate-Peril M.A."/>
            <person name="Barrangou R."/>
            <person name="Buck B.L."/>
            <person name="McAuliffe O."/>
            <person name="Souther N."/>
            <person name="Dobson A."/>
            <person name="Duong T."/>
            <person name="Callanan M."/>
            <person name="Lick S."/>
            <person name="Hamrick A."/>
            <person name="Cano R."/>
            <person name="Klaenhammer T.R."/>
        </authorList>
    </citation>
    <scope>NUCLEOTIDE SEQUENCE [LARGE SCALE GENOMIC DNA]</scope>
    <source>
        <strain>ATCC 700396 / NCK56 / N2 / NCFM</strain>
    </source>
</reference>
<dbReference type="EC" id="3.1.26.4" evidence="1"/>
<dbReference type="EMBL" id="CP000033">
    <property type="protein sequence ID" value="AAV42830.1"/>
    <property type="molecule type" value="Genomic_DNA"/>
</dbReference>
<dbReference type="RefSeq" id="WP_011254306.1">
    <property type="nucleotide sequence ID" value="NC_006814.3"/>
</dbReference>
<dbReference type="RefSeq" id="YP_193861.1">
    <property type="nucleotide sequence ID" value="NC_006814.3"/>
</dbReference>
<dbReference type="SMR" id="Q5FKE4"/>
<dbReference type="STRING" id="272621.LBA0979"/>
<dbReference type="KEGG" id="lac:LBA0979"/>
<dbReference type="PATRIC" id="fig|272621.13.peg.930"/>
<dbReference type="eggNOG" id="COG0164">
    <property type="taxonomic scope" value="Bacteria"/>
</dbReference>
<dbReference type="HOGENOM" id="CLU_036532_2_1_9"/>
<dbReference type="OrthoDB" id="9803420at2"/>
<dbReference type="BioCyc" id="LACI272621:G1G49-980-MONOMER"/>
<dbReference type="Proteomes" id="UP000006381">
    <property type="component" value="Chromosome"/>
</dbReference>
<dbReference type="GO" id="GO:0005737">
    <property type="term" value="C:cytoplasm"/>
    <property type="evidence" value="ECO:0007669"/>
    <property type="project" value="UniProtKB-SubCell"/>
</dbReference>
<dbReference type="GO" id="GO:0032299">
    <property type="term" value="C:ribonuclease H2 complex"/>
    <property type="evidence" value="ECO:0007669"/>
    <property type="project" value="TreeGrafter"/>
</dbReference>
<dbReference type="GO" id="GO:0030145">
    <property type="term" value="F:manganese ion binding"/>
    <property type="evidence" value="ECO:0007669"/>
    <property type="project" value="UniProtKB-UniRule"/>
</dbReference>
<dbReference type="GO" id="GO:0003723">
    <property type="term" value="F:RNA binding"/>
    <property type="evidence" value="ECO:0007669"/>
    <property type="project" value="InterPro"/>
</dbReference>
<dbReference type="GO" id="GO:0004523">
    <property type="term" value="F:RNA-DNA hybrid ribonuclease activity"/>
    <property type="evidence" value="ECO:0007669"/>
    <property type="project" value="UniProtKB-UniRule"/>
</dbReference>
<dbReference type="GO" id="GO:0043137">
    <property type="term" value="P:DNA replication, removal of RNA primer"/>
    <property type="evidence" value="ECO:0007669"/>
    <property type="project" value="TreeGrafter"/>
</dbReference>
<dbReference type="GO" id="GO:0006298">
    <property type="term" value="P:mismatch repair"/>
    <property type="evidence" value="ECO:0007669"/>
    <property type="project" value="TreeGrafter"/>
</dbReference>
<dbReference type="CDD" id="cd07182">
    <property type="entry name" value="RNase_HII_bacteria_HII_like"/>
    <property type="match status" value="1"/>
</dbReference>
<dbReference type="FunFam" id="3.30.420.10:FF:000006">
    <property type="entry name" value="Ribonuclease HII"/>
    <property type="match status" value="1"/>
</dbReference>
<dbReference type="Gene3D" id="3.30.420.10">
    <property type="entry name" value="Ribonuclease H-like superfamily/Ribonuclease H"/>
    <property type="match status" value="1"/>
</dbReference>
<dbReference type="HAMAP" id="MF_00052_B">
    <property type="entry name" value="RNase_HII_B"/>
    <property type="match status" value="1"/>
</dbReference>
<dbReference type="InterPro" id="IPR022898">
    <property type="entry name" value="RNase_HII"/>
</dbReference>
<dbReference type="InterPro" id="IPR001352">
    <property type="entry name" value="RNase_HII/HIII"/>
</dbReference>
<dbReference type="InterPro" id="IPR024567">
    <property type="entry name" value="RNase_HII/HIII_dom"/>
</dbReference>
<dbReference type="InterPro" id="IPR012337">
    <property type="entry name" value="RNaseH-like_sf"/>
</dbReference>
<dbReference type="InterPro" id="IPR036397">
    <property type="entry name" value="RNaseH_sf"/>
</dbReference>
<dbReference type="NCBIfam" id="NF000594">
    <property type="entry name" value="PRK00015.1-1"/>
    <property type="match status" value="1"/>
</dbReference>
<dbReference type="NCBIfam" id="NF000595">
    <property type="entry name" value="PRK00015.1-3"/>
    <property type="match status" value="1"/>
</dbReference>
<dbReference type="PANTHER" id="PTHR10954">
    <property type="entry name" value="RIBONUCLEASE H2 SUBUNIT A"/>
    <property type="match status" value="1"/>
</dbReference>
<dbReference type="PANTHER" id="PTHR10954:SF18">
    <property type="entry name" value="RIBONUCLEASE HII"/>
    <property type="match status" value="1"/>
</dbReference>
<dbReference type="Pfam" id="PF01351">
    <property type="entry name" value="RNase_HII"/>
    <property type="match status" value="1"/>
</dbReference>
<dbReference type="SUPFAM" id="SSF53098">
    <property type="entry name" value="Ribonuclease H-like"/>
    <property type="match status" value="1"/>
</dbReference>
<dbReference type="PROSITE" id="PS51975">
    <property type="entry name" value="RNASE_H_2"/>
    <property type="match status" value="1"/>
</dbReference>
<gene>
    <name evidence="1" type="primary">rnhB</name>
    <name type="ordered locus">LBA0979</name>
</gene>
<accession>Q5FKE4</accession>
<feature type="chain" id="PRO_0000111581" description="Ribonuclease HII">
    <location>
        <begin position="1"/>
        <end position="250"/>
    </location>
</feature>
<feature type="domain" description="RNase H type-2" evidence="2">
    <location>
        <begin position="66"/>
        <end position="250"/>
    </location>
</feature>
<feature type="binding site" evidence="1">
    <location>
        <position position="72"/>
    </location>
    <ligand>
        <name>a divalent metal cation</name>
        <dbReference type="ChEBI" id="CHEBI:60240"/>
    </ligand>
</feature>
<feature type="binding site" evidence="1">
    <location>
        <position position="73"/>
    </location>
    <ligand>
        <name>a divalent metal cation</name>
        <dbReference type="ChEBI" id="CHEBI:60240"/>
    </ligand>
</feature>
<feature type="binding site" evidence="1">
    <location>
        <position position="164"/>
    </location>
    <ligand>
        <name>a divalent metal cation</name>
        <dbReference type="ChEBI" id="CHEBI:60240"/>
    </ligand>
</feature>
<comment type="function">
    <text evidence="1">Endonuclease that specifically degrades the RNA of RNA-DNA hybrids.</text>
</comment>
<comment type="catalytic activity">
    <reaction evidence="1">
        <text>Endonucleolytic cleavage to 5'-phosphomonoester.</text>
        <dbReference type="EC" id="3.1.26.4"/>
    </reaction>
</comment>
<comment type="cofactor">
    <cofactor evidence="1">
        <name>Mn(2+)</name>
        <dbReference type="ChEBI" id="CHEBI:29035"/>
    </cofactor>
    <cofactor evidence="1">
        <name>Mg(2+)</name>
        <dbReference type="ChEBI" id="CHEBI:18420"/>
    </cofactor>
    <text evidence="1">Manganese or magnesium. Binds 1 divalent metal ion per monomer in the absence of substrate. May bind a second metal ion after substrate binding.</text>
</comment>
<comment type="subcellular location">
    <subcellularLocation>
        <location evidence="1">Cytoplasm</location>
    </subcellularLocation>
</comment>
<comment type="similarity">
    <text evidence="1">Belongs to the RNase HII family.</text>
</comment>